<sequence length="420" mass="43326">MALYCGDNFGVYSQPGLPPPAATAAAPGAPPAARAPYGLADYAAPPAAAANPYLWLNGPGVGGPPSAAAAAAAAYLGAPPPPPPPGAAAGPFLQPPPAAGTFGCSQRPFAQPAPAAPASPAAPAGPGELGWLSMASREDLMKMVRPPYSYSALIAMAIQSAPERKLTLSHIYQFVADSFPFYQRSKAGWQNSIRHNLSLNDCFKKVPRDEDDPGKGNYWTLDPNCEKMFDNGNFRRKRKRRSEASNGSTVAAGTSKSEEGLSSGLGSGVGGKPEEESPSTLLRPSHSPEPPEGTKSTASSPGGPMLTSTPCLNTFFSSLSSLSVSSSVSTQRALPGSRHLGIQGAQLPSSGVFSPTSISEASADTLQLSNSTSNSTGQRSSYYSPFPASTSGGQSSPFSSPFHNFSMVNSLIYPREGSEV</sequence>
<comment type="function">
    <text evidence="1 5">Transcription factor required for pharyngeal arch development, which is involved in hair, ear, jaw and dental development (PubMed:37041148). May act as a pioneer transcription factor during pharyngeal arch development (By similarity). Required for epithelial cell differentiation within the epidermis (By similarity). Acts at multiple stages of otic placode induction: necessary for preplacodal ectoderm to execute an inner ear program (By similarity). Required for hair follicle stem cell specification (By similarity). Acts downstream of TBX1 for the formation of the thymus and parathyroid glands from the third pharyngeal pouch (By similarity).</text>
</comment>
<comment type="subcellular location">
    <subcellularLocation>
        <location evidence="5">Nucleus</location>
    </subcellularLocation>
</comment>
<comment type="domain">
    <text evidence="1">The 9aaTAD motif is a transactivation domain present in a large number of yeast and animal transcription factors.</text>
</comment>
<comment type="PTM">
    <text evidence="1">Phosphorylation promotes the transcription factor activity. Dephosphorylation by protein phosphatase 2A (PP2A) reduces its activity.</text>
</comment>
<comment type="disease" evidence="4 5">
    <disease id="DI-06720">
        <name>Craniofacial microsomia 2</name>
        <acronym>CFM2</acronym>
        <description>A form of craniofacial microsomia, a disorder characterized by a spectrum of craniofacial malformations ranging from isolated microtia with or without aural atresia to underdevelopment of the mandible, maxilla, orbit, facial soft tissue, and/or facial nerve. Most CFM2 patients exhibit isolated unilateral or bilateral grade II/III microtia, with or without atresia, although some patients show only minor external ear defects. Mandibular hypoplasia, micrognathia, and dental anomalies have also been observed. CFM2 inheritance can be autosomal dominant or autosomal recessive.</description>
        <dbReference type="MIM" id="620444"/>
    </disease>
    <text>The disease is caused by variants affecting the gene represented in this entry.</text>
</comment>
<accession>A8MTJ6</accession>
<accession>B5RI09</accession>
<proteinExistence type="evidence at protein level"/>
<evidence type="ECO:0000250" key="1">
    <source>
        <dbReference type="UniProtKB" id="D3Z120"/>
    </source>
</evidence>
<evidence type="ECO:0000255" key="2">
    <source>
        <dbReference type="PROSITE-ProRule" id="PRU00089"/>
    </source>
</evidence>
<evidence type="ECO:0000256" key="3">
    <source>
        <dbReference type="SAM" id="MobiDB-lite"/>
    </source>
</evidence>
<evidence type="ECO:0000269" key="4">
    <source>
    </source>
</evidence>
<evidence type="ECO:0000269" key="5">
    <source>
    </source>
</evidence>
<evidence type="ECO:0000303" key="6">
    <source>
    </source>
</evidence>
<evidence type="ECO:0000305" key="7"/>
<evidence type="ECO:0000312" key="8">
    <source>
        <dbReference type="HGNC" id="HGNC:35123"/>
    </source>
</evidence>
<reference key="1">
    <citation type="journal article" date="2005" name="Nature">
        <title>Generation and annotation of the DNA sequences of human chromosomes 2 and 4.</title>
        <authorList>
            <person name="Hillier L.W."/>
            <person name="Graves T.A."/>
            <person name="Fulton R.S."/>
            <person name="Fulton L.A."/>
            <person name="Pepin K.H."/>
            <person name="Minx P."/>
            <person name="Wagner-McPherson C."/>
            <person name="Layman D."/>
            <person name="Wylie K."/>
            <person name="Sekhon M."/>
            <person name="Becker M.C."/>
            <person name="Fewell G.A."/>
            <person name="Delehaunty K.D."/>
            <person name="Miner T.L."/>
            <person name="Nash W.E."/>
            <person name="Kremitzki C."/>
            <person name="Oddy L."/>
            <person name="Du H."/>
            <person name="Sun H."/>
            <person name="Bradshaw-Cordum H."/>
            <person name="Ali J."/>
            <person name="Carter J."/>
            <person name="Cordes M."/>
            <person name="Harris A."/>
            <person name="Isak A."/>
            <person name="van Brunt A."/>
            <person name="Nguyen C."/>
            <person name="Du F."/>
            <person name="Courtney L."/>
            <person name="Kalicki J."/>
            <person name="Ozersky P."/>
            <person name="Abbott S."/>
            <person name="Armstrong J."/>
            <person name="Belter E.A."/>
            <person name="Caruso L."/>
            <person name="Cedroni M."/>
            <person name="Cotton M."/>
            <person name="Davidson T."/>
            <person name="Desai A."/>
            <person name="Elliott G."/>
            <person name="Erb T."/>
            <person name="Fronick C."/>
            <person name="Gaige T."/>
            <person name="Haakenson W."/>
            <person name="Haglund K."/>
            <person name="Holmes A."/>
            <person name="Harkins R."/>
            <person name="Kim K."/>
            <person name="Kruchowski S.S."/>
            <person name="Strong C.M."/>
            <person name="Grewal N."/>
            <person name="Goyea E."/>
            <person name="Hou S."/>
            <person name="Levy A."/>
            <person name="Martinka S."/>
            <person name="Mead K."/>
            <person name="McLellan M.D."/>
            <person name="Meyer R."/>
            <person name="Randall-Maher J."/>
            <person name="Tomlinson C."/>
            <person name="Dauphin-Kohlberg S."/>
            <person name="Kozlowicz-Reilly A."/>
            <person name="Shah N."/>
            <person name="Swearengen-Shahid S."/>
            <person name="Snider J."/>
            <person name="Strong J.T."/>
            <person name="Thompson J."/>
            <person name="Yoakum M."/>
            <person name="Leonard S."/>
            <person name="Pearman C."/>
            <person name="Trani L."/>
            <person name="Radionenko M."/>
            <person name="Waligorski J.E."/>
            <person name="Wang C."/>
            <person name="Rock S.M."/>
            <person name="Tin-Wollam A.-M."/>
            <person name="Maupin R."/>
            <person name="Latreille P."/>
            <person name="Wendl M.C."/>
            <person name="Yang S.-P."/>
            <person name="Pohl C."/>
            <person name="Wallis J.W."/>
            <person name="Spieth J."/>
            <person name="Bieri T.A."/>
            <person name="Berkowicz N."/>
            <person name="Nelson J.O."/>
            <person name="Osborne J."/>
            <person name="Ding L."/>
            <person name="Meyer R."/>
            <person name="Sabo A."/>
            <person name="Shotland Y."/>
            <person name="Sinha P."/>
            <person name="Wohldmann P.E."/>
            <person name="Cook L.L."/>
            <person name="Hickenbotham M.T."/>
            <person name="Eldred J."/>
            <person name="Williams D."/>
            <person name="Jones T.A."/>
            <person name="She X."/>
            <person name="Ciccarelli F.D."/>
            <person name="Izaurralde E."/>
            <person name="Taylor J."/>
            <person name="Schmutz J."/>
            <person name="Myers R.M."/>
            <person name="Cox D.R."/>
            <person name="Huang X."/>
            <person name="McPherson J.D."/>
            <person name="Mardis E.R."/>
            <person name="Clifton S.W."/>
            <person name="Warren W.C."/>
            <person name="Chinwalla A.T."/>
            <person name="Eddy S.R."/>
            <person name="Marra M.A."/>
            <person name="Ovcharenko I."/>
            <person name="Furey T.S."/>
            <person name="Miller W."/>
            <person name="Eichler E.E."/>
            <person name="Bork P."/>
            <person name="Suyama M."/>
            <person name="Torrents D."/>
            <person name="Waterston R.H."/>
            <person name="Wilson R.K."/>
        </authorList>
    </citation>
    <scope>NUCLEOTIDE SEQUENCE [LARGE SCALE GENOMIC DNA]</scope>
</reference>
<reference key="2">
    <citation type="journal article" date="2008" name="Science">
        <title>A mutation in hairless dogs implicates FOXI3 in ectodermal development.</title>
        <authorList>
            <person name="Droegemueller C."/>
            <person name="Karlsson E.K."/>
            <person name="Hytoenen M.K."/>
            <person name="Perloski M."/>
            <person name="Dolf G."/>
            <person name="Sainio K."/>
            <person name="Lohi H."/>
            <person name="Lindblad-Toh K."/>
            <person name="Leeb T."/>
        </authorList>
    </citation>
    <scope>IDENTIFICATION</scope>
</reference>
<reference key="3">
    <citation type="journal article" date="2023" name="Genet. Med.">
        <title>Damaging variants in FOXI3 cause microtia and craniofacial microsomia.</title>
        <authorList>
            <person name="Quiat D."/>
            <person name="Timberlake A.T."/>
            <person name="Curran J.J."/>
            <person name="Cunningham M.L."/>
            <person name="McDonough B."/>
            <person name="Artunduaga M.A."/>
            <person name="DePalma S.R."/>
            <person name="Duenas-Roque M.M."/>
            <person name="Gorham J.M."/>
            <person name="Gustafson J.A."/>
            <person name="Hamdan U."/>
            <person name="Hing A.V."/>
            <person name="Hurtado-Villa P."/>
            <person name="Nicolau Y."/>
            <person name="Osorno G."/>
            <person name="Pachajoa H."/>
            <person name="Porras-Hurtado G.L."/>
            <person name="Quintanilla-Dieck L."/>
            <person name="Serrano L."/>
            <person name="Tumblin M."/>
            <person name="Zarante I."/>
            <person name="Luquetti D.V."/>
            <person name="Eavey R.D."/>
            <person name="Heike C.L."/>
            <person name="Seidman J.G."/>
            <person name="Seidman C.E."/>
        </authorList>
    </citation>
    <scope>VARIANTS CFM2 TRP-236 AND CYS-240</scope>
</reference>
<reference key="4">
    <citation type="journal article" date="2023" name="Nat. Commun.">
        <title>FOXI3 pathogenic variants cause one form of craniofacial microsomia.</title>
        <authorList>
            <person name="Mao K."/>
            <person name="Borel C."/>
            <person name="Ansar M."/>
            <person name="Jolly A."/>
            <person name="Makrythanasis P."/>
            <person name="Froehlich C."/>
            <person name="Iwaszkiewicz J."/>
            <person name="Wang B."/>
            <person name="Xu X."/>
            <person name="Li Q."/>
            <person name="Blanc X."/>
            <person name="Zhu H."/>
            <person name="Chen Q."/>
            <person name="Jin F."/>
            <person name="Ankamreddy H."/>
            <person name="Singh S."/>
            <person name="Zhang H."/>
            <person name="Wang X."/>
            <person name="Chen P."/>
            <person name="Ranza E."/>
            <person name="Paracha S.A."/>
            <person name="Shah S.F."/>
            <person name="Guida V."/>
            <person name="Piceci-Sparascio F."/>
            <person name="Melis D."/>
            <person name="Dallapiccola B."/>
            <person name="Digilio M.C."/>
            <person name="Novelli A."/>
            <person name="Magliozzi M."/>
            <person name="Fadda M.T."/>
            <person name="Streff H."/>
            <person name="Machol K."/>
            <person name="Lewis R.A."/>
            <person name="Zoete V."/>
            <person name="Squeo G.M."/>
            <person name="Prontera P."/>
            <person name="Mancano G."/>
            <person name="Gori G."/>
            <person name="Mariani M."/>
            <person name="Selicorni A."/>
            <person name="Psoni S."/>
            <person name="Fryssira H."/>
            <person name="Douzgou S."/>
            <person name="Marlin S."/>
            <person name="Biskup S."/>
            <person name="De Luca A."/>
            <person name="Merla G."/>
            <person name="Zhao S."/>
            <person name="Cox T.C."/>
            <person name="Groves A.K."/>
            <person name="Lupski J.R."/>
            <person name="Zhang Q."/>
            <person name="Zhang Y.B."/>
            <person name="Antonarakis S.E."/>
        </authorList>
    </citation>
    <scope>FUNCTION</scope>
    <scope>SUBCELLULAR LOCATION</scope>
    <scope>VARIANTS CFM2 TYR-102; 119-SER--ALA-124 DEL; THR-147; ASN-169; PHE-199; ARG-225; LEU-234; VAL-234; CYS-235; GLN-236; TRP-236; GLN-238; CYS-240; HIS-240; LEU-355; 373-SER--THR-376 DEL AND 415-ARG--VAL-420 DEL</scope>
    <scope>CHARACTERIZATION OF VARIANTS CFM2 TYR-102; 119-SER--ALA-124 DEL; THR-147; ASN-169; PHE-199; ARG-225; LEU-234; VAL-234; CYS-235; GLN-236; TRP-236; GLN-238; CYS-240; HIS-240; LEU-355; 373-SER--THR-376 DEL AND 415-ARG--VAL-420 DEL</scope>
</reference>
<protein>
    <recommendedName>
        <fullName evidence="7">Forkhead box protein I3</fullName>
    </recommendedName>
</protein>
<gene>
    <name evidence="6 8" type="primary">FOXI3</name>
</gene>
<name>FOXI3_HUMAN</name>
<dbReference type="EMBL" id="AC012671">
    <property type="status" value="NOT_ANNOTATED_CDS"/>
    <property type="molecule type" value="Genomic_DNA"/>
</dbReference>
<dbReference type="EMBL" id="BN001221">
    <property type="protein sequence ID" value="CAR63508.1"/>
    <property type="molecule type" value="Genomic_DNA"/>
</dbReference>
<dbReference type="EMBL" id="BN001222">
    <property type="protein sequence ID" value="CAR63509.1"/>
    <property type="molecule type" value="mRNA"/>
</dbReference>
<dbReference type="CCDS" id="CCDS77433.1"/>
<dbReference type="RefSeq" id="NP_001129121.1">
    <property type="nucleotide sequence ID" value="NM_001135649.3"/>
</dbReference>
<dbReference type="SMR" id="A8MTJ6"/>
<dbReference type="BioGRID" id="131290">
    <property type="interactions" value="2"/>
</dbReference>
<dbReference type="STRING" id="9606.ENSP00000478384"/>
<dbReference type="iPTMnet" id="A8MTJ6"/>
<dbReference type="PhosphoSitePlus" id="A8MTJ6"/>
<dbReference type="BioMuta" id="FOXI3"/>
<dbReference type="MassIVE" id="A8MTJ6"/>
<dbReference type="PaxDb" id="9606-ENSP00000478384"/>
<dbReference type="PeptideAtlas" id="A8MTJ6"/>
<dbReference type="ProteomicsDB" id="2029"/>
<dbReference type="Antibodypedia" id="73246">
    <property type="antibodies" value="125 antibodies from 23 providers"/>
</dbReference>
<dbReference type="DNASU" id="344167"/>
<dbReference type="Ensembl" id="ENST00000428390.3">
    <property type="protein sequence ID" value="ENSP00000478384.2"/>
    <property type="gene ID" value="ENSG00000214336.5"/>
</dbReference>
<dbReference type="GeneID" id="344167"/>
<dbReference type="KEGG" id="hsa:344167"/>
<dbReference type="MANE-Select" id="ENST00000428390.3">
    <property type="protein sequence ID" value="ENSP00000478384.2"/>
    <property type="RefSeq nucleotide sequence ID" value="NM_001135649.3"/>
    <property type="RefSeq protein sequence ID" value="NP_001129121.1"/>
</dbReference>
<dbReference type="UCSC" id="uc032nud.2">
    <property type="organism name" value="human"/>
</dbReference>
<dbReference type="AGR" id="HGNC:35123"/>
<dbReference type="CTD" id="344167"/>
<dbReference type="DisGeNET" id="344167"/>
<dbReference type="GeneCards" id="FOXI3"/>
<dbReference type="HGNC" id="HGNC:35123">
    <property type="gene designation" value="FOXI3"/>
</dbReference>
<dbReference type="HPA" id="ENSG00000214336">
    <property type="expression patterns" value="Group enriched (placenta, retina)"/>
</dbReference>
<dbReference type="MalaCards" id="FOXI3"/>
<dbReference type="MIM" id="612351">
    <property type="type" value="gene"/>
</dbReference>
<dbReference type="MIM" id="620444">
    <property type="type" value="phenotype"/>
</dbReference>
<dbReference type="neXtProt" id="NX_A8MTJ6"/>
<dbReference type="OpenTargets" id="ENSG00000214336"/>
<dbReference type="PharmGKB" id="PA164720107"/>
<dbReference type="VEuPathDB" id="HostDB:ENSG00000214336"/>
<dbReference type="eggNOG" id="KOG2294">
    <property type="taxonomic scope" value="Eukaryota"/>
</dbReference>
<dbReference type="GeneTree" id="ENSGT00940000162575"/>
<dbReference type="HOGENOM" id="CLU_046860_0_0_1"/>
<dbReference type="InParanoid" id="A8MTJ6"/>
<dbReference type="OMA" id="AGYLWGM"/>
<dbReference type="OrthoDB" id="5402974at2759"/>
<dbReference type="PAN-GO" id="A8MTJ6">
    <property type="GO annotations" value="5 GO annotations based on evolutionary models"/>
</dbReference>
<dbReference type="PhylomeDB" id="A8MTJ6"/>
<dbReference type="PathwayCommons" id="A8MTJ6"/>
<dbReference type="BioGRID-ORCS" id="344167">
    <property type="hits" value="16 hits in 269 CRISPR screens"/>
</dbReference>
<dbReference type="GenomeRNAi" id="344167"/>
<dbReference type="Pharos" id="A8MTJ6">
    <property type="development level" value="Tbio"/>
</dbReference>
<dbReference type="PRO" id="PR:A8MTJ6"/>
<dbReference type="Proteomes" id="UP000005640">
    <property type="component" value="Chromosome 2"/>
</dbReference>
<dbReference type="RNAct" id="A8MTJ6">
    <property type="molecule type" value="protein"/>
</dbReference>
<dbReference type="Bgee" id="ENSG00000214336">
    <property type="expression patterns" value="Expressed in primordial germ cell in gonad and 8 other cell types or tissues"/>
</dbReference>
<dbReference type="GO" id="GO:0005634">
    <property type="term" value="C:nucleus"/>
    <property type="evidence" value="ECO:0000314"/>
    <property type="project" value="UniProtKB"/>
</dbReference>
<dbReference type="GO" id="GO:0000981">
    <property type="term" value="F:DNA-binding transcription factor activity, RNA polymerase II-specific"/>
    <property type="evidence" value="ECO:0000314"/>
    <property type="project" value="UniProtKB"/>
</dbReference>
<dbReference type="GO" id="GO:0000978">
    <property type="term" value="F:RNA polymerase II cis-regulatory region sequence-specific DNA binding"/>
    <property type="evidence" value="ECO:0000318"/>
    <property type="project" value="GO_Central"/>
</dbReference>
<dbReference type="GO" id="GO:0009653">
    <property type="term" value="P:anatomical structure morphogenesis"/>
    <property type="evidence" value="ECO:0000318"/>
    <property type="project" value="GO_Central"/>
</dbReference>
<dbReference type="GO" id="GO:0030154">
    <property type="term" value="P:cell differentiation"/>
    <property type="evidence" value="ECO:0000318"/>
    <property type="project" value="GO_Central"/>
</dbReference>
<dbReference type="GO" id="GO:0009957">
    <property type="term" value="P:epidermal cell fate specification"/>
    <property type="evidence" value="ECO:0000250"/>
    <property type="project" value="UniProtKB"/>
</dbReference>
<dbReference type="GO" id="GO:0001942">
    <property type="term" value="P:hair follicle development"/>
    <property type="evidence" value="ECO:0000250"/>
    <property type="project" value="UniProtKB"/>
</dbReference>
<dbReference type="GO" id="GO:0042475">
    <property type="term" value="P:odontogenesis of dentin-containing tooth"/>
    <property type="evidence" value="ECO:0000250"/>
    <property type="project" value="UniProtKB"/>
</dbReference>
<dbReference type="GO" id="GO:1905040">
    <property type="term" value="P:otic placode development"/>
    <property type="evidence" value="ECO:0000250"/>
    <property type="project" value="UniProtKB"/>
</dbReference>
<dbReference type="GO" id="GO:0060017">
    <property type="term" value="P:parathyroid gland development"/>
    <property type="evidence" value="ECO:0000250"/>
    <property type="project" value="UniProtKB"/>
</dbReference>
<dbReference type="GO" id="GO:0060037">
    <property type="term" value="P:pharyngeal system development"/>
    <property type="evidence" value="ECO:0000315"/>
    <property type="project" value="UniProtKB"/>
</dbReference>
<dbReference type="GO" id="GO:0006357">
    <property type="term" value="P:regulation of transcription by RNA polymerase II"/>
    <property type="evidence" value="ECO:0000318"/>
    <property type="project" value="GO_Central"/>
</dbReference>
<dbReference type="GO" id="GO:0048538">
    <property type="term" value="P:thymus development"/>
    <property type="evidence" value="ECO:0000250"/>
    <property type="project" value="UniProtKB"/>
</dbReference>
<dbReference type="CDD" id="cd20053">
    <property type="entry name" value="FH_FOXI1"/>
    <property type="match status" value="1"/>
</dbReference>
<dbReference type="FunFam" id="1.10.10.10:FF:000016">
    <property type="entry name" value="Forkhead box protein I1"/>
    <property type="match status" value="1"/>
</dbReference>
<dbReference type="Gene3D" id="1.10.10.10">
    <property type="entry name" value="Winged helix-like DNA-binding domain superfamily/Winged helix DNA-binding domain"/>
    <property type="match status" value="1"/>
</dbReference>
<dbReference type="InterPro" id="IPR001766">
    <property type="entry name" value="Fork_head_dom"/>
</dbReference>
<dbReference type="InterPro" id="IPR050211">
    <property type="entry name" value="FOX_domain-containing"/>
</dbReference>
<dbReference type="InterPro" id="IPR018122">
    <property type="entry name" value="TF_fork_head_CS_1"/>
</dbReference>
<dbReference type="InterPro" id="IPR030456">
    <property type="entry name" value="TF_fork_head_CS_2"/>
</dbReference>
<dbReference type="InterPro" id="IPR036388">
    <property type="entry name" value="WH-like_DNA-bd_sf"/>
</dbReference>
<dbReference type="InterPro" id="IPR036390">
    <property type="entry name" value="WH_DNA-bd_sf"/>
</dbReference>
<dbReference type="PANTHER" id="PTHR11829">
    <property type="entry name" value="FORKHEAD BOX PROTEIN"/>
    <property type="match status" value="1"/>
</dbReference>
<dbReference type="PANTHER" id="PTHR11829:SF310">
    <property type="entry name" value="FORKHEAD BOX PROTEIN I3"/>
    <property type="match status" value="1"/>
</dbReference>
<dbReference type="Pfam" id="PF00250">
    <property type="entry name" value="Forkhead"/>
    <property type="match status" value="1"/>
</dbReference>
<dbReference type="PRINTS" id="PR00053">
    <property type="entry name" value="FORKHEAD"/>
</dbReference>
<dbReference type="SMART" id="SM00339">
    <property type="entry name" value="FH"/>
    <property type="match status" value="1"/>
</dbReference>
<dbReference type="SUPFAM" id="SSF46785">
    <property type="entry name" value="Winged helix' DNA-binding domain"/>
    <property type="match status" value="1"/>
</dbReference>
<dbReference type="PROSITE" id="PS00657">
    <property type="entry name" value="FORK_HEAD_1"/>
    <property type="match status" value="1"/>
</dbReference>
<dbReference type="PROSITE" id="PS00658">
    <property type="entry name" value="FORK_HEAD_2"/>
    <property type="match status" value="1"/>
</dbReference>
<dbReference type="PROSITE" id="PS50039">
    <property type="entry name" value="FORK_HEAD_3"/>
    <property type="match status" value="1"/>
</dbReference>
<feature type="chain" id="PRO_0000341225" description="Forkhead box protein I3">
    <location>
        <begin position="1"/>
        <end position="420"/>
    </location>
</feature>
<feature type="DNA-binding region" description="Fork-head" evidence="2">
    <location>
        <begin position="145"/>
        <end position="239"/>
    </location>
</feature>
<feature type="region of interest" description="Disordered" evidence="3">
    <location>
        <begin position="103"/>
        <end position="122"/>
    </location>
</feature>
<feature type="region of interest" description="Disordered" evidence="3">
    <location>
        <begin position="234"/>
        <end position="306"/>
    </location>
</feature>
<feature type="region of interest" description="Disordered" evidence="3">
    <location>
        <begin position="364"/>
        <end position="396"/>
    </location>
</feature>
<feature type="short sequence motif" description="Nuclear localization signal" evidence="5">
    <location>
        <begin position="235"/>
        <end position="241"/>
    </location>
</feature>
<feature type="short sequence motif" description="9aaTAD" evidence="1">
    <location>
        <begin position="406"/>
        <end position="414"/>
    </location>
</feature>
<feature type="compositionally biased region" description="Low complexity" evidence="3">
    <location>
        <begin position="108"/>
        <end position="122"/>
    </location>
</feature>
<feature type="compositionally biased region" description="Polar residues" evidence="3">
    <location>
        <begin position="294"/>
        <end position="306"/>
    </location>
</feature>
<feature type="modified residue" description="Phosphoserine" evidence="1">
    <location>
        <position position="119"/>
    </location>
</feature>
<feature type="modified residue" description="Phosphoserine" evidence="1">
    <location>
        <position position="277"/>
    </location>
</feature>
<feature type="modified residue" description="Phosphoserine" evidence="1">
    <location>
        <position position="285"/>
    </location>
</feature>
<feature type="modified residue" description="Phosphoserine" evidence="1">
    <location>
        <position position="287"/>
    </location>
</feature>
<feature type="sequence variant" id="VAR_088275" description="In CFM2; uncertain significance; decreased transcription factor activity; does not affect localization to the nucleus." evidence="5">
    <original>F</original>
    <variation>Y</variation>
    <location>
        <position position="102"/>
    </location>
</feature>
<feature type="sequence variant" id="VAR_088276" description="In CFM2; decreased transcription factor activity; does not affect localization to the nucleus." evidence="5">
    <location>
        <begin position="119"/>
        <end position="124"/>
    </location>
</feature>
<feature type="sequence variant" id="VAR_088277" description="In CFM2; decreased transcription factor activity; localization to the nucleus but aggregating into granular foci." evidence="5">
    <original>P</original>
    <variation>T</variation>
    <location>
        <position position="147"/>
    </location>
</feature>
<feature type="sequence variant" id="VAR_088278" description="In CFM2; decreased transcription factor activity; does not affect localization to the nucleus; dbSNP:rs1321755909." evidence="5">
    <original>S</original>
    <variation>N</variation>
    <location>
        <position position="169"/>
    </location>
</feature>
<feature type="sequence variant" id="VAR_088279" description="In CFM2; decreased transcription factor activity; does not affect localization to the nucleus." evidence="5">
    <original>L</original>
    <variation>F</variation>
    <location>
        <position position="199"/>
    </location>
</feature>
<feature type="sequence variant" id="VAR_088280" description="In CFM2; decreased transcription factor activity; localization to the nucleus but aggregating into granular foci." evidence="5">
    <original>C</original>
    <variation>R</variation>
    <location>
        <position position="225"/>
    </location>
</feature>
<feature type="sequence variant" id="VAR_088281" description="In CFM2; decreased transcription factor activity; does not affect localization to the nucleus; dbSNP:rs955268781." evidence="5">
    <original>F</original>
    <variation>L</variation>
    <location>
        <position position="234"/>
    </location>
</feature>
<feature type="sequence variant" id="VAR_088282" description="In CFM2; decreased transcription factor activity; localization to the nucleus but aggregating into granular foci." evidence="5">
    <original>F</original>
    <variation>V</variation>
    <location>
        <position position="234"/>
    </location>
</feature>
<feature type="sequence variant" id="VAR_088283" description="In CFM2; decreased transcription factor activity; decreased localization to the nucleus; dbSNP:rs1316696594." evidence="5">
    <original>R</original>
    <variation>C</variation>
    <location>
        <position position="235"/>
    </location>
</feature>
<feature type="sequence variant" id="VAR_088284" description="In CFM2; decreased transcription factor activity; decreased localization to the nucleus; dbSNP:rs182321240." evidence="5">
    <original>R</original>
    <variation>Q</variation>
    <location>
        <position position="236"/>
    </location>
</feature>
<feature type="sequence variant" id="VAR_088285" description="In CFM2; decreased transcription factor activity; decreased localization to the nucleus; dbSNP:rs1675993398." evidence="4 5">
    <original>R</original>
    <variation>W</variation>
    <location>
        <position position="236"/>
    </location>
</feature>
<feature type="sequence variant" id="VAR_088286" description="In CFM2; decreased transcription factor activity; decreased localization to the nucleus; dbSNP:rs923448937." evidence="5">
    <original>R</original>
    <variation>Q</variation>
    <location>
        <position position="238"/>
    </location>
</feature>
<feature type="sequence variant" id="VAR_088287" description="In CFM2; decreased transcription factor activity; decreased localization to the nucleus; dbSNP:rs1451029499." evidence="4 5">
    <original>R</original>
    <variation>C</variation>
    <location>
        <position position="240"/>
    </location>
</feature>
<feature type="sequence variant" id="VAR_088288" description="In CFM2; decreased transcription factor activity; decreased localization to the nucleus; dbSNP:rs1370585001." evidence="5">
    <original>R</original>
    <variation>H</variation>
    <location>
        <position position="240"/>
    </location>
</feature>
<feature type="sequence variant" id="VAR_088289" description="In CFM2; decreased transcription factor activity; does not affect localization to the nucleus; dbSNP:rs965851622." evidence="5">
    <original>P</original>
    <variation>L</variation>
    <location>
        <position position="355"/>
    </location>
</feature>
<feature type="sequence variant" id="VAR_088290" description="In CFM2; uncertain significance; decreased transcription factor activity; does not affect localization to the nucleus." evidence="5">
    <location>
        <begin position="373"/>
        <end position="376"/>
    </location>
</feature>
<feature type="sequence variant" id="VAR_088291" description="In CFM2; decreased transcription factor activity; does not affect localization to the nucleus." evidence="5">
    <location>
        <begin position="415"/>
        <end position="420"/>
    </location>
</feature>
<organism>
    <name type="scientific">Homo sapiens</name>
    <name type="common">Human</name>
    <dbReference type="NCBI Taxonomy" id="9606"/>
    <lineage>
        <taxon>Eukaryota</taxon>
        <taxon>Metazoa</taxon>
        <taxon>Chordata</taxon>
        <taxon>Craniata</taxon>
        <taxon>Vertebrata</taxon>
        <taxon>Euteleostomi</taxon>
        <taxon>Mammalia</taxon>
        <taxon>Eutheria</taxon>
        <taxon>Euarchontoglires</taxon>
        <taxon>Primates</taxon>
        <taxon>Haplorrhini</taxon>
        <taxon>Catarrhini</taxon>
        <taxon>Hominidae</taxon>
        <taxon>Homo</taxon>
    </lineage>
</organism>
<keyword id="KW-0217">Developmental protein</keyword>
<keyword id="KW-0225">Disease variant</keyword>
<keyword id="KW-0238">DNA-binding</keyword>
<keyword id="KW-0539">Nucleus</keyword>
<keyword id="KW-0597">Phosphoprotein</keyword>
<keyword id="KW-1267">Proteomics identification</keyword>
<keyword id="KW-1185">Reference proteome</keyword>
<keyword id="KW-0804">Transcription</keyword>
<keyword id="KW-0805">Transcription regulation</keyword>